<reference key="1">
    <citation type="journal article" date="2010" name="Genome Biol.">
        <title>Structure and dynamics of the pan-genome of Streptococcus pneumoniae and closely related species.</title>
        <authorList>
            <person name="Donati C."/>
            <person name="Hiller N.L."/>
            <person name="Tettelin H."/>
            <person name="Muzzi A."/>
            <person name="Croucher N.J."/>
            <person name="Angiuoli S.V."/>
            <person name="Oggioni M."/>
            <person name="Dunning Hotopp J.C."/>
            <person name="Hu F.Z."/>
            <person name="Riley D.R."/>
            <person name="Covacci A."/>
            <person name="Mitchell T.J."/>
            <person name="Bentley S.D."/>
            <person name="Kilian M."/>
            <person name="Ehrlich G.D."/>
            <person name="Rappuoli R."/>
            <person name="Moxon E.R."/>
            <person name="Masignani V."/>
        </authorList>
    </citation>
    <scope>NUCLEOTIDE SEQUENCE [LARGE SCALE GENOMIC DNA]</scope>
    <source>
        <strain>Taiwan19F-14</strain>
    </source>
</reference>
<comment type="function">
    <text evidence="1">Catalyzes the reductive methylation of 2'-deoxyuridine-5'-monophosphate (dUMP) to 2'-deoxythymidine-5'-monophosphate (dTMP) while utilizing 5,10-methylenetetrahydrofolate (mTHF) as the methyl donor and reductant in the reaction, yielding dihydrofolate (DHF) as a by-product. This enzymatic reaction provides an intracellular de novo source of dTMP, an essential precursor for DNA biosynthesis.</text>
</comment>
<comment type="catalytic activity">
    <reaction evidence="1">
        <text>dUMP + (6R)-5,10-methylene-5,6,7,8-tetrahydrofolate = 7,8-dihydrofolate + dTMP</text>
        <dbReference type="Rhea" id="RHEA:12104"/>
        <dbReference type="ChEBI" id="CHEBI:15636"/>
        <dbReference type="ChEBI" id="CHEBI:57451"/>
        <dbReference type="ChEBI" id="CHEBI:63528"/>
        <dbReference type="ChEBI" id="CHEBI:246422"/>
        <dbReference type="EC" id="2.1.1.45"/>
    </reaction>
</comment>
<comment type="pathway">
    <text evidence="1">Pyrimidine metabolism; dTTP biosynthesis.</text>
</comment>
<comment type="subunit">
    <text evidence="1">Homodimer.</text>
</comment>
<comment type="subcellular location">
    <subcellularLocation>
        <location evidence="1">Cytoplasm</location>
    </subcellularLocation>
</comment>
<comment type="similarity">
    <text evidence="1">Belongs to the thymidylate synthase family. Bacterial-type ThyA subfamily.</text>
</comment>
<sequence>MTKADTIFKENIERILKEGVFSEQARPKYKDGTVANSKYVTGAFSEYDLSKGEFPITTLRPIAIKSAIKEVLWIYQDQSNSLEVLNDKYNVHYWNDWEVGDTGTIGERYGAVVKKHDIINKLLKQLETNPWNRRNIISLWDYQAFEETDGLLPCAFQTMFDVRRVDGEIYLDATLTQRSNDMLVAHHINAMQYVALQMMIAKHFGWKVGKFFYFINNLHIYDNQFEQAQELLRREPSNCQPRLVLNVPDGTNFFDIKAEDFELVDYDPVKPQLKFDLAI</sequence>
<protein>
    <recommendedName>
        <fullName evidence="1">Thymidylate synthase</fullName>
        <shortName evidence="1">TS</shortName>
        <shortName evidence="1">TSase</shortName>
        <ecNumber evidence="1">2.1.1.45</ecNumber>
    </recommendedName>
</protein>
<gene>
    <name evidence="1" type="primary">thyA</name>
    <name type="ordered locus">SPT_0693</name>
</gene>
<name>TYSY_STRZT</name>
<evidence type="ECO:0000255" key="1">
    <source>
        <dbReference type="HAMAP-Rule" id="MF_00008"/>
    </source>
</evidence>
<accession>C1CQE7</accession>
<keyword id="KW-0963">Cytoplasm</keyword>
<keyword id="KW-0489">Methyltransferase</keyword>
<keyword id="KW-0545">Nucleotide biosynthesis</keyword>
<keyword id="KW-0808">Transferase</keyword>
<organism>
    <name type="scientific">Streptococcus pneumoniae (strain Taiwan19F-14)</name>
    <dbReference type="NCBI Taxonomy" id="487213"/>
    <lineage>
        <taxon>Bacteria</taxon>
        <taxon>Bacillati</taxon>
        <taxon>Bacillota</taxon>
        <taxon>Bacilli</taxon>
        <taxon>Lactobacillales</taxon>
        <taxon>Streptococcaceae</taxon>
        <taxon>Streptococcus</taxon>
    </lineage>
</organism>
<proteinExistence type="inferred from homology"/>
<feature type="chain" id="PRO_1000197265" description="Thymidylate synthase">
    <location>
        <begin position="1"/>
        <end position="279"/>
    </location>
</feature>
<feature type="active site" description="Nucleophile" evidence="1">
    <location>
        <position position="154"/>
    </location>
</feature>
<feature type="binding site" evidence="1">
    <location>
        <begin position="133"/>
        <end position="134"/>
    </location>
    <ligand>
        <name>dUMP</name>
        <dbReference type="ChEBI" id="CHEBI:246422"/>
        <note>ligand shared between dimeric partners</note>
    </ligand>
</feature>
<feature type="binding site" description="in other chain" evidence="1">
    <location>
        <begin position="178"/>
        <end position="181"/>
    </location>
    <ligand>
        <name>dUMP</name>
        <dbReference type="ChEBI" id="CHEBI:246422"/>
        <note>ligand shared between dimeric partners</note>
    </ligand>
</feature>
<feature type="binding site" evidence="1">
    <location>
        <position position="181"/>
    </location>
    <ligand>
        <name>(6R)-5,10-methylene-5,6,7,8-tetrahydrofolate</name>
        <dbReference type="ChEBI" id="CHEBI:15636"/>
    </ligand>
</feature>
<feature type="binding site" description="in other chain" evidence="1">
    <location>
        <position position="189"/>
    </location>
    <ligand>
        <name>dUMP</name>
        <dbReference type="ChEBI" id="CHEBI:246422"/>
        <note>ligand shared between dimeric partners</note>
    </ligand>
</feature>
<feature type="binding site" description="in other chain" evidence="1">
    <location>
        <begin position="219"/>
        <end position="221"/>
    </location>
    <ligand>
        <name>dUMP</name>
        <dbReference type="ChEBI" id="CHEBI:246422"/>
        <note>ligand shared between dimeric partners</note>
    </ligand>
</feature>
<feature type="binding site" evidence="1">
    <location>
        <position position="278"/>
    </location>
    <ligand>
        <name>(6R)-5,10-methylene-5,6,7,8-tetrahydrofolate</name>
        <dbReference type="ChEBI" id="CHEBI:15636"/>
    </ligand>
</feature>
<dbReference type="EC" id="2.1.1.45" evidence="1"/>
<dbReference type="EMBL" id="CP000921">
    <property type="protein sequence ID" value="ACO22621.1"/>
    <property type="molecule type" value="Genomic_DNA"/>
</dbReference>
<dbReference type="RefSeq" id="WP_000158639.1">
    <property type="nucleotide sequence ID" value="NC_012469.1"/>
</dbReference>
<dbReference type="SMR" id="C1CQE7"/>
<dbReference type="KEGG" id="snt:SPT_0693"/>
<dbReference type="HOGENOM" id="CLU_021669_0_0_9"/>
<dbReference type="UniPathway" id="UPA00575"/>
<dbReference type="GO" id="GO:0005829">
    <property type="term" value="C:cytosol"/>
    <property type="evidence" value="ECO:0007669"/>
    <property type="project" value="TreeGrafter"/>
</dbReference>
<dbReference type="GO" id="GO:0004799">
    <property type="term" value="F:thymidylate synthase activity"/>
    <property type="evidence" value="ECO:0007669"/>
    <property type="project" value="UniProtKB-UniRule"/>
</dbReference>
<dbReference type="GO" id="GO:0006231">
    <property type="term" value="P:dTMP biosynthetic process"/>
    <property type="evidence" value="ECO:0007669"/>
    <property type="project" value="UniProtKB-UniRule"/>
</dbReference>
<dbReference type="GO" id="GO:0006235">
    <property type="term" value="P:dTTP biosynthetic process"/>
    <property type="evidence" value="ECO:0007669"/>
    <property type="project" value="UniProtKB-UniRule"/>
</dbReference>
<dbReference type="GO" id="GO:0032259">
    <property type="term" value="P:methylation"/>
    <property type="evidence" value="ECO:0007669"/>
    <property type="project" value="UniProtKB-KW"/>
</dbReference>
<dbReference type="CDD" id="cd00351">
    <property type="entry name" value="TS_Pyrimidine_HMase"/>
    <property type="match status" value="1"/>
</dbReference>
<dbReference type="FunFam" id="3.30.572.10:FF:000006">
    <property type="entry name" value="Thymidylate synthase"/>
    <property type="match status" value="1"/>
</dbReference>
<dbReference type="Gene3D" id="3.30.572.10">
    <property type="entry name" value="Thymidylate synthase/dCMP hydroxymethylase domain"/>
    <property type="match status" value="1"/>
</dbReference>
<dbReference type="HAMAP" id="MF_00008">
    <property type="entry name" value="Thymidy_synth_bact"/>
    <property type="match status" value="1"/>
</dbReference>
<dbReference type="InterPro" id="IPR045097">
    <property type="entry name" value="Thymidate_synth/dCMP_Mease"/>
</dbReference>
<dbReference type="InterPro" id="IPR023451">
    <property type="entry name" value="Thymidate_synth/dCMP_Mease_dom"/>
</dbReference>
<dbReference type="InterPro" id="IPR036926">
    <property type="entry name" value="Thymidate_synth/dCMP_Mease_sf"/>
</dbReference>
<dbReference type="InterPro" id="IPR000398">
    <property type="entry name" value="Thymidylate_synthase"/>
</dbReference>
<dbReference type="InterPro" id="IPR020940">
    <property type="entry name" value="Thymidylate_synthase_AS"/>
</dbReference>
<dbReference type="NCBIfam" id="NF002495">
    <property type="entry name" value="PRK01827.1-1"/>
    <property type="match status" value="1"/>
</dbReference>
<dbReference type="PANTHER" id="PTHR11548">
    <property type="entry name" value="THYMIDYLATE SYNTHASE 1"/>
    <property type="match status" value="1"/>
</dbReference>
<dbReference type="PANTHER" id="PTHR11548:SF1">
    <property type="entry name" value="THYMIDYLATE SYNTHASE 1"/>
    <property type="match status" value="1"/>
</dbReference>
<dbReference type="Pfam" id="PF00303">
    <property type="entry name" value="Thymidylat_synt"/>
    <property type="match status" value="1"/>
</dbReference>
<dbReference type="PRINTS" id="PR00108">
    <property type="entry name" value="THYMDSNTHASE"/>
</dbReference>
<dbReference type="SUPFAM" id="SSF55831">
    <property type="entry name" value="Thymidylate synthase/dCMP hydroxymethylase"/>
    <property type="match status" value="1"/>
</dbReference>
<dbReference type="PROSITE" id="PS00091">
    <property type="entry name" value="THYMIDYLATE_SYNTHASE"/>
    <property type="match status" value="1"/>
</dbReference>